<comment type="function">
    <text evidence="3 4">Involved in melatonin biosynthesis (PubMed:29901843). Can function as acetylserotonin O-methyltransferase (PubMed:29901843). Catalyzes the transfer of a methyl group onto N-acetylserotonin, producing melatonin (N-acetyl-5-methoxytryptamine) (PubMed:29901843). Involved in the regulation of jasmonate- and brassinosteroid-mediated plant growth and defense responses (PubMed:26864209).</text>
</comment>
<comment type="catalytic activity">
    <reaction evidence="4">
        <text>N-acetylserotonin + S-adenosyl-L-methionine = melatonin + S-adenosyl-L-homocysteine + H(+)</text>
        <dbReference type="Rhea" id="RHEA:15573"/>
        <dbReference type="ChEBI" id="CHEBI:15378"/>
        <dbReference type="ChEBI" id="CHEBI:16796"/>
        <dbReference type="ChEBI" id="CHEBI:17697"/>
        <dbReference type="ChEBI" id="CHEBI:57856"/>
        <dbReference type="ChEBI" id="CHEBI:59789"/>
        <dbReference type="EC" id="2.1.1.4"/>
    </reaction>
    <physiologicalReaction direction="left-to-right" evidence="4">
        <dbReference type="Rhea" id="RHEA:15574"/>
    </physiologicalReaction>
</comment>
<comment type="pathway">
    <text evidence="7">Aromatic compound metabolism; melatonin biosynthesis; melatonin from serotonin: step 1/2.</text>
</comment>
<comment type="subcellular location">
    <subcellularLocation>
        <location evidence="3 4">Plastid</location>
        <location evidence="3 4">Chloroplast</location>
    </subcellularLocation>
</comment>
<comment type="tissue specificity">
    <text evidence="4">Expressed in roots, leaf sheaths, flag leaves and panicles.</text>
</comment>
<comment type="disruption phenotype">
    <text evidence="3 4">Reduced plant growth and grain yield (PubMed:26864209, PubMed:29901843). Reduced content of chlorophyll in leaves (PubMed:26864209, PubMed:29901843). Reduced number and size of chloroplasts (PubMed:29901843). Altered structure of chloroplasts (PubMed:29901843). Reduced root length and lateral root number (PubMed:29901843). Formation of hypersensitive response (HR)-like lesions (PubMed:26864209). Early heading and premature leaf senescence (PubMed:29901843). Accumulation of the antimicrobial compounds momilactones and phytocassanes, and constitutive expression of pathogenesis-related genes (PubMed:26864209). Over-accumulation of jasmonates and elevated levels of brassinosteroid (PubMed:26864209). Increased leaf lamina bending (PubMed:26864209).</text>
</comment>
<comment type="miscellaneous">
    <text evidence="4">Overexpression of MTS1 in transgenic lines enhances grain yield.</text>
</comment>
<comment type="similarity">
    <text evidence="7">Belongs to the methyltransferase superfamily. LCMT family.</text>
</comment>
<proteinExistence type="evidence at protein level"/>
<keyword id="KW-0150">Chloroplast</keyword>
<keyword id="KW-0471">Melatonin biosynthesis</keyword>
<keyword id="KW-0489">Methyltransferase</keyword>
<keyword id="KW-0934">Plastid</keyword>
<keyword id="KW-1185">Reference proteome</keyword>
<keyword id="KW-0949">S-adenosyl-L-methionine</keyword>
<keyword id="KW-0808">Transferase</keyword>
<keyword id="KW-0809">Transit peptide</keyword>
<evidence type="ECO:0000255" key="1"/>
<evidence type="ECO:0000256" key="2">
    <source>
        <dbReference type="SAM" id="MobiDB-lite"/>
    </source>
</evidence>
<evidence type="ECO:0000269" key="3">
    <source>
    </source>
</evidence>
<evidence type="ECO:0000269" key="4">
    <source>
    </source>
</evidence>
<evidence type="ECO:0000303" key="5">
    <source>
    </source>
</evidence>
<evidence type="ECO:0000303" key="6">
    <source>
    </source>
</evidence>
<evidence type="ECO:0000305" key="7"/>
<evidence type="ECO:0000312" key="8">
    <source>
        <dbReference type="EMBL" id="BAC84755.1"/>
    </source>
</evidence>
<evidence type="ECO:0000312" key="9">
    <source>
        <dbReference type="EMBL" id="BAD30653.1"/>
    </source>
</evidence>
<evidence type="ECO:0000312" key="10">
    <source>
        <dbReference type="EMBL" id="BAF21201.1"/>
    </source>
</evidence>
<evidence type="ECO:0000312" key="11">
    <source>
        <dbReference type="EMBL" id="EEE66884.1"/>
    </source>
</evidence>
<accession>Q6YSY5</accession>
<accession>B9FWE7</accession>
<sequence>MPVLPWLAAAATTPVRRSPPLPATPRALLRLPASSFPPWSNCAKSGLPPRGPFATAADTPLGGSLPEPEEERDTLLDGALRAARFRDEESRRPDPLFIDPYAAVLLSLDVASEDKDLLALHLMPSAEHYRLVTRYIDDKLQHFISNSDDLRQIVLLTDGMDTRPYRLSWPRLSVVYDVSPRRVFITASQQLRGAGAKISRNCVVLHTSSESPDLQAGLNKNGFNGNRPSLWVLQGLPLFTFKSLEDLLLVIGNLAMKGSIFIGEVPRFTQWGAATDMASEQDRLENLFFTQGFRVSFVHYEEVAKDVGLGLDSPPEIHGRAIFIAEQLRFSDAQMESFRMHFERIEDDADEDGFEEL</sequence>
<dbReference type="EC" id="2.1.1.4" evidence="4"/>
<dbReference type="EMBL" id="AP006266">
    <property type="protein sequence ID" value="BAC84755.1"/>
    <property type="molecule type" value="Genomic_DNA"/>
</dbReference>
<dbReference type="EMBL" id="AP004344">
    <property type="protein sequence ID" value="BAD30653.1"/>
    <property type="molecule type" value="Genomic_DNA"/>
</dbReference>
<dbReference type="EMBL" id="AP008213">
    <property type="protein sequence ID" value="BAF21201.1"/>
    <property type="molecule type" value="Genomic_DNA"/>
</dbReference>
<dbReference type="EMBL" id="AP014963">
    <property type="protein sequence ID" value="BAT00815.1"/>
    <property type="molecule type" value="Genomic_DNA"/>
</dbReference>
<dbReference type="EMBL" id="CM000144">
    <property type="protein sequence ID" value="EEE66884.1"/>
    <property type="molecule type" value="Genomic_DNA"/>
</dbReference>
<dbReference type="SMR" id="Q6YSY5"/>
<dbReference type="FunCoup" id="Q6YSY5">
    <property type="interactions" value="384"/>
</dbReference>
<dbReference type="STRING" id="39947.Q6YSY5"/>
<dbReference type="PaxDb" id="39947-Q6YSY5"/>
<dbReference type="EnsemblPlants" id="Os07t0247100-01">
    <property type="protein sequence ID" value="Os07t0247100-01"/>
    <property type="gene ID" value="Os07g0247100"/>
</dbReference>
<dbReference type="GeneID" id="4342830"/>
<dbReference type="Gramene" id="Os07t0247100-01">
    <property type="protein sequence ID" value="Os07t0247100-01"/>
    <property type="gene ID" value="Os07g0247100"/>
</dbReference>
<dbReference type="KEGG" id="dosa:Os07g0247100"/>
<dbReference type="KEGG" id="osa:4342830"/>
<dbReference type="eggNOG" id="ENOG502QQB5">
    <property type="taxonomic scope" value="Eukaryota"/>
</dbReference>
<dbReference type="HOGENOM" id="CLU_067447_0_0_1"/>
<dbReference type="InParanoid" id="Q6YSY5"/>
<dbReference type="OMA" id="ATKGCIF"/>
<dbReference type="OrthoDB" id="203237at2759"/>
<dbReference type="UniPathway" id="UPA00837">
    <property type="reaction ID" value="UER00815"/>
</dbReference>
<dbReference type="Proteomes" id="UP000000763">
    <property type="component" value="Chromosome 7"/>
</dbReference>
<dbReference type="Proteomes" id="UP000007752">
    <property type="component" value="Chromosome 7"/>
</dbReference>
<dbReference type="Proteomes" id="UP000059680">
    <property type="component" value="Chromosome 7"/>
</dbReference>
<dbReference type="GO" id="GO:0009507">
    <property type="term" value="C:chloroplast"/>
    <property type="evidence" value="ECO:0007669"/>
    <property type="project" value="UniProtKB-SubCell"/>
</dbReference>
<dbReference type="GO" id="GO:0017096">
    <property type="term" value="F:acetylserotonin O-methyltransferase activity"/>
    <property type="evidence" value="ECO:0007669"/>
    <property type="project" value="UniProtKB-EC"/>
</dbReference>
<dbReference type="GO" id="GO:0030187">
    <property type="term" value="P:melatonin biosynthetic process"/>
    <property type="evidence" value="ECO:0007669"/>
    <property type="project" value="UniProtKB-UniPathway"/>
</dbReference>
<dbReference type="GO" id="GO:0032259">
    <property type="term" value="P:methylation"/>
    <property type="evidence" value="ECO:0007669"/>
    <property type="project" value="UniProtKB-KW"/>
</dbReference>
<dbReference type="Gene3D" id="3.40.50.150">
    <property type="entry name" value="Vaccinia Virus protein VP39"/>
    <property type="match status" value="1"/>
</dbReference>
<dbReference type="InterPro" id="IPR007213">
    <property type="entry name" value="Ppm1/Ppm2/Tcmp"/>
</dbReference>
<dbReference type="InterPro" id="IPR029063">
    <property type="entry name" value="SAM-dependent_MTases_sf"/>
</dbReference>
<dbReference type="PANTHER" id="PTHR43619">
    <property type="entry name" value="S-ADENOSYL-L-METHIONINE-DEPENDENT METHYLTRANSFERASE YKTD-RELATED"/>
    <property type="match status" value="1"/>
</dbReference>
<dbReference type="PANTHER" id="PTHR43619:SF2">
    <property type="entry name" value="S-ADENOSYL-L-METHIONINE-DEPENDENT METHYLTRANSFERASES SUPERFAMILY PROTEIN"/>
    <property type="match status" value="1"/>
</dbReference>
<dbReference type="Pfam" id="PF04072">
    <property type="entry name" value="LCM"/>
    <property type="match status" value="1"/>
</dbReference>
<dbReference type="SUPFAM" id="SSF53335">
    <property type="entry name" value="S-adenosyl-L-methionine-dependent methyltransferases"/>
    <property type="match status" value="1"/>
</dbReference>
<organism>
    <name type="scientific">Oryza sativa subsp. japonica</name>
    <name type="common">Rice</name>
    <dbReference type="NCBI Taxonomy" id="39947"/>
    <lineage>
        <taxon>Eukaryota</taxon>
        <taxon>Viridiplantae</taxon>
        <taxon>Streptophyta</taxon>
        <taxon>Embryophyta</taxon>
        <taxon>Tracheophyta</taxon>
        <taxon>Spermatophyta</taxon>
        <taxon>Magnoliopsida</taxon>
        <taxon>Liliopsida</taxon>
        <taxon>Poales</taxon>
        <taxon>Poaceae</taxon>
        <taxon>BOP clade</taxon>
        <taxon>Oryzoideae</taxon>
        <taxon>Oryzeae</taxon>
        <taxon>Oryzinae</taxon>
        <taxon>Oryza</taxon>
        <taxon>Oryza sativa</taxon>
    </lineage>
</organism>
<protein>
    <recommendedName>
        <fullName evidence="6">O-methyltransferase 1, chloroplastic</fullName>
        <shortName evidence="6">OsMTS1</shortName>
    </recommendedName>
    <alternativeName>
        <fullName evidence="7">Acetylserotonin O-methyltransferase MTS1</fullName>
        <ecNumber evidence="4">2.1.1.4</ecNumber>
    </alternativeName>
    <alternativeName>
        <fullName evidence="5">Protein LESION AND LAMINA BENDING</fullName>
        <shortName evidence="5">OsLLB</shortName>
    </alternativeName>
    <alternativeName>
        <fullName evidence="6">Protein PREMATURE LEAF SENESCENCE 3</fullName>
    </alternativeName>
    <alternativeName>
        <fullName evidence="7">Putative leucine carboxyl methyltransferase MTS1</fullName>
    </alternativeName>
</protein>
<gene>
    <name evidence="6" type="primary">MTS1</name>
    <name evidence="5" type="synonym">LLB</name>
    <name evidence="6" type="synonym">PLS3</name>
    <name evidence="10" type="ordered locus">Os07g0247100</name>
    <name evidence="7" type="ordered locus">LOC_Os07g14350</name>
    <name evidence="11" type="ORF">OsJ_23703</name>
    <name evidence="8" type="ORF">OSJNBa0003K21.34</name>
    <name evidence="9" type="ORF">P0639B07.8</name>
</gene>
<reference key="1">
    <citation type="journal article" date="2005" name="Nature">
        <title>The map-based sequence of the rice genome.</title>
        <authorList>
            <consortium name="International rice genome sequencing project (IRGSP)"/>
        </authorList>
    </citation>
    <scope>NUCLEOTIDE SEQUENCE [LARGE SCALE GENOMIC DNA]</scope>
    <source>
        <strain>cv. Nipponbare</strain>
    </source>
</reference>
<reference key="2">
    <citation type="journal article" date="2008" name="Nucleic Acids Res.">
        <title>The rice annotation project database (RAP-DB): 2008 update.</title>
        <authorList>
            <consortium name="The rice annotation project (RAP)"/>
        </authorList>
    </citation>
    <scope>GENOME REANNOTATION</scope>
    <source>
        <strain>cv. Nipponbare</strain>
    </source>
</reference>
<reference key="3">
    <citation type="journal article" date="2013" name="Rice">
        <title>Improvement of the Oryza sativa Nipponbare reference genome using next generation sequence and optical map data.</title>
        <authorList>
            <person name="Kawahara Y."/>
            <person name="de la Bastide M."/>
            <person name="Hamilton J.P."/>
            <person name="Kanamori H."/>
            <person name="McCombie W.R."/>
            <person name="Ouyang S."/>
            <person name="Schwartz D.C."/>
            <person name="Tanaka T."/>
            <person name="Wu J."/>
            <person name="Zhou S."/>
            <person name="Childs K.L."/>
            <person name="Davidson R.M."/>
            <person name="Lin H."/>
            <person name="Quesada-Ocampo L."/>
            <person name="Vaillancourt B."/>
            <person name="Sakai H."/>
            <person name="Lee S.S."/>
            <person name="Kim J."/>
            <person name="Numa H."/>
            <person name="Itoh T."/>
            <person name="Buell C.R."/>
            <person name="Matsumoto T."/>
        </authorList>
    </citation>
    <scope>GENOME REANNOTATION</scope>
    <source>
        <strain>cv. Nipponbare</strain>
    </source>
</reference>
<reference key="4">
    <citation type="journal article" date="2005" name="PLoS Biol.">
        <title>The genomes of Oryza sativa: a history of duplications.</title>
        <authorList>
            <person name="Yu J."/>
            <person name="Wang J."/>
            <person name="Lin W."/>
            <person name="Li S."/>
            <person name="Li H."/>
            <person name="Zhou J."/>
            <person name="Ni P."/>
            <person name="Dong W."/>
            <person name="Hu S."/>
            <person name="Zeng C."/>
            <person name="Zhang J."/>
            <person name="Zhang Y."/>
            <person name="Li R."/>
            <person name="Xu Z."/>
            <person name="Li S."/>
            <person name="Li X."/>
            <person name="Zheng H."/>
            <person name="Cong L."/>
            <person name="Lin L."/>
            <person name="Yin J."/>
            <person name="Geng J."/>
            <person name="Li G."/>
            <person name="Shi J."/>
            <person name="Liu J."/>
            <person name="Lv H."/>
            <person name="Li J."/>
            <person name="Wang J."/>
            <person name="Deng Y."/>
            <person name="Ran L."/>
            <person name="Shi X."/>
            <person name="Wang X."/>
            <person name="Wu Q."/>
            <person name="Li C."/>
            <person name="Ren X."/>
            <person name="Wang J."/>
            <person name="Wang X."/>
            <person name="Li D."/>
            <person name="Liu D."/>
            <person name="Zhang X."/>
            <person name="Ji Z."/>
            <person name="Zhao W."/>
            <person name="Sun Y."/>
            <person name="Zhang Z."/>
            <person name="Bao J."/>
            <person name="Han Y."/>
            <person name="Dong L."/>
            <person name="Ji J."/>
            <person name="Chen P."/>
            <person name="Wu S."/>
            <person name="Liu J."/>
            <person name="Xiao Y."/>
            <person name="Bu D."/>
            <person name="Tan J."/>
            <person name="Yang L."/>
            <person name="Ye C."/>
            <person name="Zhang J."/>
            <person name="Xu J."/>
            <person name="Zhou Y."/>
            <person name="Yu Y."/>
            <person name="Zhang B."/>
            <person name="Zhuang S."/>
            <person name="Wei H."/>
            <person name="Liu B."/>
            <person name="Lei M."/>
            <person name="Yu H."/>
            <person name="Li Y."/>
            <person name="Xu H."/>
            <person name="Wei S."/>
            <person name="He X."/>
            <person name="Fang L."/>
            <person name="Zhang Z."/>
            <person name="Zhang Y."/>
            <person name="Huang X."/>
            <person name="Su Z."/>
            <person name="Tong W."/>
            <person name="Li J."/>
            <person name="Tong Z."/>
            <person name="Li S."/>
            <person name="Ye J."/>
            <person name="Wang L."/>
            <person name="Fang L."/>
            <person name="Lei T."/>
            <person name="Chen C.-S."/>
            <person name="Chen H.-C."/>
            <person name="Xu Z."/>
            <person name="Li H."/>
            <person name="Huang H."/>
            <person name="Zhang F."/>
            <person name="Xu H."/>
            <person name="Li N."/>
            <person name="Zhao C."/>
            <person name="Li S."/>
            <person name="Dong L."/>
            <person name="Huang Y."/>
            <person name="Li L."/>
            <person name="Xi Y."/>
            <person name="Qi Q."/>
            <person name="Li W."/>
            <person name="Zhang B."/>
            <person name="Hu W."/>
            <person name="Zhang Y."/>
            <person name="Tian X."/>
            <person name="Jiao Y."/>
            <person name="Liang X."/>
            <person name="Jin J."/>
            <person name="Gao L."/>
            <person name="Zheng W."/>
            <person name="Hao B."/>
            <person name="Liu S.-M."/>
            <person name="Wang W."/>
            <person name="Yuan L."/>
            <person name="Cao M."/>
            <person name="McDermott J."/>
            <person name="Samudrala R."/>
            <person name="Wang J."/>
            <person name="Wong G.K.-S."/>
            <person name="Yang H."/>
        </authorList>
    </citation>
    <scope>NUCLEOTIDE SEQUENCE [LARGE SCALE GENOMIC DNA]</scope>
    <source>
        <strain>cv. Nipponbare</strain>
    </source>
</reference>
<reference key="5">
    <citation type="journal article" date="2016" name="New Phytol.">
        <title>A chloroplast-localized protein LESION AND LAMINA BENDING affects defence and growth responses in rice.</title>
        <authorList>
            <person name="Tamiru M."/>
            <person name="Takagi H."/>
            <person name="Abe A."/>
            <person name="Yokota T."/>
            <person name="Kanzaki H."/>
            <person name="Okamoto H."/>
            <person name="Saitoh H."/>
            <person name="Takahashi H."/>
            <person name="Fujisaki K."/>
            <person name="Oikawa K."/>
            <person name="Uemura A."/>
            <person name="Natsume S."/>
            <person name="Jikumaru Y."/>
            <person name="Matsuura H."/>
            <person name="Umemura K."/>
            <person name="Terry M.J."/>
            <person name="Terauchi R."/>
        </authorList>
    </citation>
    <scope>FUNCTION</scope>
    <scope>SUBCELLULAR LOCATION</scope>
    <scope>DISRUPTION PHENOTYPE</scope>
</reference>
<reference key="6">
    <citation type="journal article" date="2018" name="Plant J.">
        <title>Premature leaf senescence 3, encoding a methyltransferase, is required for melatonin biosynthesis in rice.</title>
        <authorList>
            <person name="Hong Y."/>
            <person name="Zhang Y."/>
            <person name="Sinumporn S."/>
            <person name="Yu N."/>
            <person name="Zhan X."/>
            <person name="Shen X."/>
            <person name="Chen D."/>
            <person name="Yu P."/>
            <person name="Wu W."/>
            <person name="Liu Q."/>
            <person name="Cao Z."/>
            <person name="Zhao C."/>
            <person name="Cheng S."/>
            <person name="Cao L."/>
        </authorList>
    </citation>
    <scope>FUNCTION</scope>
    <scope>CATALYTIC ACTIVITY</scope>
    <scope>SUBCELLULAR LOCATION</scope>
    <scope>TISSUE SPECIFICITY</scope>
    <scope>DISRUPTION PHENOTYPE</scope>
</reference>
<name>MTS1_ORYSJ</name>
<feature type="transit peptide" description="Chloroplast" evidence="1">
    <location>
        <begin position="1"/>
        <end position="53"/>
    </location>
</feature>
<feature type="chain" id="PRO_0000449397" description="O-methyltransferase 1, chloroplastic">
    <location>
        <begin position="54"/>
        <end position="357"/>
    </location>
</feature>
<feature type="region of interest" description="Disordered" evidence="2">
    <location>
        <begin position="50"/>
        <end position="71"/>
    </location>
</feature>